<comment type="function">
    <text evidence="1">Catalyzes the ATP-dependent phosphorylation of L-homoserine to L-homoserine phosphate.</text>
</comment>
<comment type="catalytic activity">
    <reaction evidence="1">
        <text>L-homoserine + ATP = O-phospho-L-homoserine + ADP + H(+)</text>
        <dbReference type="Rhea" id="RHEA:13985"/>
        <dbReference type="ChEBI" id="CHEBI:15378"/>
        <dbReference type="ChEBI" id="CHEBI:30616"/>
        <dbReference type="ChEBI" id="CHEBI:57476"/>
        <dbReference type="ChEBI" id="CHEBI:57590"/>
        <dbReference type="ChEBI" id="CHEBI:456216"/>
        <dbReference type="EC" id="2.7.1.39"/>
    </reaction>
</comment>
<comment type="pathway">
    <text evidence="1">Amino-acid biosynthesis; L-threonine biosynthesis; L-threonine from L-aspartate: step 4/5.</text>
</comment>
<comment type="subcellular location">
    <subcellularLocation>
        <location evidence="1">Cytoplasm</location>
    </subcellularLocation>
</comment>
<comment type="similarity">
    <text evidence="1">Belongs to the GHMP kinase family. Homoserine kinase subfamily.</text>
</comment>
<accession>Q8ZZX3</accession>
<sequence>MKAPSTSANLGAGFDIVAVAHDAYFAEAYTAVGSGCGVHVKFKGYDPGPENTVTRSFKKFFELTGICRGVEVEVENNIPIARGLGSSGAAAVAALAAFIREAGIKTDPRAVIEAAGYGETAAAGSPHFDNVAGAALGGAVVLTSLSPIDYVKFSPRLIFVVGVPEVPPMPNKTKVMREVLPKSVEFKTYVRQTARVASLIAGLALSDPRLVARGMEDEVVEAARAPYVPGYARVRKYAFEAGALGVSLSGAGPSVIALVNEKEAEAVRDAVLRAYAEEGLRAEVKIASITEGALASL</sequence>
<keyword id="KW-0028">Amino-acid biosynthesis</keyword>
<keyword id="KW-0067">ATP-binding</keyword>
<keyword id="KW-0963">Cytoplasm</keyword>
<keyword id="KW-0418">Kinase</keyword>
<keyword id="KW-0547">Nucleotide-binding</keyword>
<keyword id="KW-1185">Reference proteome</keyword>
<keyword id="KW-0791">Threonine biosynthesis</keyword>
<keyword id="KW-0808">Transferase</keyword>
<evidence type="ECO:0000255" key="1">
    <source>
        <dbReference type="HAMAP-Rule" id="MF_00384"/>
    </source>
</evidence>
<organism>
    <name type="scientific">Pyrobaculum aerophilum (strain ATCC 51768 / DSM 7523 / JCM 9630 / CIP 104966 / NBRC 100827 / IM2)</name>
    <dbReference type="NCBI Taxonomy" id="178306"/>
    <lineage>
        <taxon>Archaea</taxon>
        <taxon>Thermoproteota</taxon>
        <taxon>Thermoprotei</taxon>
        <taxon>Thermoproteales</taxon>
        <taxon>Thermoproteaceae</taxon>
        <taxon>Pyrobaculum</taxon>
    </lineage>
</organism>
<feature type="chain" id="PRO_0000156645" description="Homoserine kinase">
    <location>
        <begin position="1"/>
        <end position="297"/>
    </location>
</feature>
<feature type="binding site" evidence="1">
    <location>
        <begin position="79"/>
        <end position="89"/>
    </location>
    <ligand>
        <name>ATP</name>
        <dbReference type="ChEBI" id="CHEBI:30616"/>
    </ligand>
</feature>
<reference key="1">
    <citation type="journal article" date="2002" name="Proc. Natl. Acad. Sci. U.S.A.">
        <title>Genome sequence of the hyperthermophilic crenarchaeon Pyrobaculum aerophilum.</title>
        <authorList>
            <person name="Fitz-Gibbon S.T."/>
            <person name="Ladner H."/>
            <person name="Kim U.-J."/>
            <person name="Stetter K.O."/>
            <person name="Simon M.I."/>
            <person name="Miller J.H."/>
        </authorList>
    </citation>
    <scope>NUCLEOTIDE SEQUENCE [LARGE SCALE GENOMIC DNA]</scope>
    <source>
        <strain>ATCC 51768 / DSM 7523 / JCM 9630 / CIP 104966 / NBRC 100827 / IM2</strain>
    </source>
</reference>
<name>KHSE_PYRAE</name>
<proteinExistence type="inferred from homology"/>
<dbReference type="EC" id="2.7.1.39" evidence="1"/>
<dbReference type="EMBL" id="AE009441">
    <property type="protein sequence ID" value="AAL62516.1"/>
    <property type="molecule type" value="Genomic_DNA"/>
</dbReference>
<dbReference type="RefSeq" id="WP_011006988.1">
    <property type="nucleotide sequence ID" value="NC_003364.1"/>
</dbReference>
<dbReference type="SMR" id="Q8ZZX3"/>
<dbReference type="FunCoup" id="Q8ZZX3">
    <property type="interactions" value="157"/>
</dbReference>
<dbReference type="STRING" id="178306.PAE0034"/>
<dbReference type="EnsemblBacteria" id="AAL62516">
    <property type="protein sequence ID" value="AAL62516"/>
    <property type="gene ID" value="PAE0034"/>
</dbReference>
<dbReference type="GeneID" id="1464730"/>
<dbReference type="KEGG" id="pai:PAE0034"/>
<dbReference type="PATRIC" id="fig|178306.9.peg.24"/>
<dbReference type="eggNOG" id="arCOG01027">
    <property type="taxonomic scope" value="Archaea"/>
</dbReference>
<dbReference type="HOGENOM" id="CLU_041243_1_1_2"/>
<dbReference type="InParanoid" id="Q8ZZX3"/>
<dbReference type="UniPathway" id="UPA00050">
    <property type="reaction ID" value="UER00064"/>
</dbReference>
<dbReference type="Proteomes" id="UP000002439">
    <property type="component" value="Chromosome"/>
</dbReference>
<dbReference type="GO" id="GO:0005737">
    <property type="term" value="C:cytoplasm"/>
    <property type="evidence" value="ECO:0007669"/>
    <property type="project" value="UniProtKB-SubCell"/>
</dbReference>
<dbReference type="GO" id="GO:0005524">
    <property type="term" value="F:ATP binding"/>
    <property type="evidence" value="ECO:0007669"/>
    <property type="project" value="UniProtKB-UniRule"/>
</dbReference>
<dbReference type="GO" id="GO:0004413">
    <property type="term" value="F:homoserine kinase activity"/>
    <property type="evidence" value="ECO:0007669"/>
    <property type="project" value="UniProtKB-UniRule"/>
</dbReference>
<dbReference type="GO" id="GO:0009088">
    <property type="term" value="P:threonine biosynthetic process"/>
    <property type="evidence" value="ECO:0007669"/>
    <property type="project" value="UniProtKB-UniRule"/>
</dbReference>
<dbReference type="Gene3D" id="3.30.230.10">
    <property type="match status" value="1"/>
</dbReference>
<dbReference type="Gene3D" id="3.30.70.890">
    <property type="entry name" value="GHMP kinase, C-terminal domain"/>
    <property type="match status" value="1"/>
</dbReference>
<dbReference type="HAMAP" id="MF_00384">
    <property type="entry name" value="Homoser_kinase"/>
    <property type="match status" value="1"/>
</dbReference>
<dbReference type="InterPro" id="IPR013750">
    <property type="entry name" value="GHMP_kinase_C_dom"/>
</dbReference>
<dbReference type="InterPro" id="IPR036554">
    <property type="entry name" value="GHMP_kinase_C_sf"/>
</dbReference>
<dbReference type="InterPro" id="IPR006204">
    <property type="entry name" value="GHMP_kinase_N_dom"/>
</dbReference>
<dbReference type="InterPro" id="IPR006203">
    <property type="entry name" value="GHMP_knse_ATP-bd_CS"/>
</dbReference>
<dbReference type="InterPro" id="IPR000870">
    <property type="entry name" value="Homoserine_kinase"/>
</dbReference>
<dbReference type="InterPro" id="IPR020568">
    <property type="entry name" value="Ribosomal_Su5_D2-typ_SF"/>
</dbReference>
<dbReference type="InterPro" id="IPR014721">
    <property type="entry name" value="Ribsml_uS5_D2-typ_fold_subgr"/>
</dbReference>
<dbReference type="NCBIfam" id="NF002288">
    <property type="entry name" value="PRK01212.1-4"/>
    <property type="match status" value="1"/>
</dbReference>
<dbReference type="NCBIfam" id="TIGR00191">
    <property type="entry name" value="thrB"/>
    <property type="match status" value="1"/>
</dbReference>
<dbReference type="PANTHER" id="PTHR20861:SF1">
    <property type="entry name" value="HOMOSERINE KINASE"/>
    <property type="match status" value="1"/>
</dbReference>
<dbReference type="PANTHER" id="PTHR20861">
    <property type="entry name" value="HOMOSERINE/4-DIPHOSPHOCYTIDYL-2-C-METHYL-D-ERYTHRITOL KINASE"/>
    <property type="match status" value="1"/>
</dbReference>
<dbReference type="Pfam" id="PF08544">
    <property type="entry name" value="GHMP_kinases_C"/>
    <property type="match status" value="1"/>
</dbReference>
<dbReference type="Pfam" id="PF00288">
    <property type="entry name" value="GHMP_kinases_N"/>
    <property type="match status" value="1"/>
</dbReference>
<dbReference type="PIRSF" id="PIRSF000676">
    <property type="entry name" value="Homoser_kin"/>
    <property type="match status" value="1"/>
</dbReference>
<dbReference type="PRINTS" id="PR00958">
    <property type="entry name" value="HOMSERKINASE"/>
</dbReference>
<dbReference type="SUPFAM" id="SSF55060">
    <property type="entry name" value="GHMP Kinase, C-terminal domain"/>
    <property type="match status" value="1"/>
</dbReference>
<dbReference type="SUPFAM" id="SSF54211">
    <property type="entry name" value="Ribosomal protein S5 domain 2-like"/>
    <property type="match status" value="1"/>
</dbReference>
<dbReference type="PROSITE" id="PS00627">
    <property type="entry name" value="GHMP_KINASES_ATP"/>
    <property type="match status" value="1"/>
</dbReference>
<gene>
    <name evidence="1" type="primary">thrB</name>
    <name type="ordered locus">PAE0034</name>
</gene>
<protein>
    <recommendedName>
        <fullName evidence="1">Homoserine kinase</fullName>
        <shortName evidence="1">HK</shortName>
        <shortName evidence="1">HSK</shortName>
        <ecNumber evidence="1">2.7.1.39</ecNumber>
    </recommendedName>
</protein>